<feature type="chain" id="PRO_1000065218" description="Regulatory protein RecX">
    <location>
        <begin position="1"/>
        <end position="258"/>
    </location>
</feature>
<organism>
    <name type="scientific">Streptococcus pyogenes serotype M2 (strain MGAS10270)</name>
    <dbReference type="NCBI Taxonomy" id="370552"/>
    <lineage>
        <taxon>Bacteria</taxon>
        <taxon>Bacillati</taxon>
        <taxon>Bacillota</taxon>
        <taxon>Bacilli</taxon>
        <taxon>Lactobacillales</taxon>
        <taxon>Streptococcaceae</taxon>
        <taxon>Streptococcus</taxon>
    </lineage>
</organism>
<name>RECX_STRPD</name>
<dbReference type="EMBL" id="CP000260">
    <property type="protein sequence ID" value="ABF34501.1"/>
    <property type="molecule type" value="Genomic_DNA"/>
</dbReference>
<dbReference type="SMR" id="Q1JFQ8"/>
<dbReference type="KEGG" id="sph:MGAS10270_Spy1436"/>
<dbReference type="HOGENOM" id="CLU_066607_4_0_9"/>
<dbReference type="Proteomes" id="UP000002436">
    <property type="component" value="Chromosome"/>
</dbReference>
<dbReference type="GO" id="GO:0005737">
    <property type="term" value="C:cytoplasm"/>
    <property type="evidence" value="ECO:0007669"/>
    <property type="project" value="UniProtKB-SubCell"/>
</dbReference>
<dbReference type="GO" id="GO:0006282">
    <property type="term" value="P:regulation of DNA repair"/>
    <property type="evidence" value="ECO:0007669"/>
    <property type="project" value="UniProtKB-UniRule"/>
</dbReference>
<dbReference type="Gene3D" id="1.10.10.10">
    <property type="entry name" value="Winged helix-like DNA-binding domain superfamily/Winged helix DNA-binding domain"/>
    <property type="match status" value="4"/>
</dbReference>
<dbReference type="HAMAP" id="MF_01114">
    <property type="entry name" value="RecX"/>
    <property type="match status" value="1"/>
</dbReference>
<dbReference type="InterPro" id="IPR053926">
    <property type="entry name" value="RecX_HTH_1st"/>
</dbReference>
<dbReference type="InterPro" id="IPR053924">
    <property type="entry name" value="RecX_HTH_2nd"/>
</dbReference>
<dbReference type="InterPro" id="IPR053925">
    <property type="entry name" value="RecX_HTH_3rd"/>
</dbReference>
<dbReference type="InterPro" id="IPR003783">
    <property type="entry name" value="Regulatory_RecX"/>
</dbReference>
<dbReference type="InterPro" id="IPR036388">
    <property type="entry name" value="WH-like_DNA-bd_sf"/>
</dbReference>
<dbReference type="NCBIfam" id="NF010733">
    <property type="entry name" value="PRK14135.1"/>
    <property type="match status" value="1"/>
</dbReference>
<dbReference type="PANTHER" id="PTHR33602">
    <property type="entry name" value="REGULATORY PROTEIN RECX FAMILY PROTEIN"/>
    <property type="match status" value="1"/>
</dbReference>
<dbReference type="PANTHER" id="PTHR33602:SF1">
    <property type="entry name" value="REGULATORY PROTEIN RECX FAMILY PROTEIN"/>
    <property type="match status" value="1"/>
</dbReference>
<dbReference type="Pfam" id="PF21982">
    <property type="entry name" value="RecX_HTH1"/>
    <property type="match status" value="1"/>
</dbReference>
<dbReference type="Pfam" id="PF02631">
    <property type="entry name" value="RecX_HTH2"/>
    <property type="match status" value="1"/>
</dbReference>
<dbReference type="Pfam" id="PF21981">
    <property type="entry name" value="RecX_HTH3"/>
    <property type="match status" value="2"/>
</dbReference>
<comment type="function">
    <text evidence="1">Modulates RecA activity.</text>
</comment>
<comment type="subcellular location">
    <subcellularLocation>
        <location evidence="1">Cytoplasm</location>
    </subcellularLocation>
</comment>
<comment type="similarity">
    <text evidence="1">Belongs to the RecX family.</text>
</comment>
<keyword id="KW-0963">Cytoplasm</keyword>
<evidence type="ECO:0000255" key="1">
    <source>
        <dbReference type="HAMAP-Rule" id="MF_01114"/>
    </source>
</evidence>
<sequence>MKITKIEKKKRLYLIELDNDDSLYVTEDTIVRFMLSKDKVLDNDQLEDMKHFAQLSYGKNLALYFLSFQQRSNKQVADYLRKHEIEEHIIADIITQLQEEQWIDDTKLADTYIRQNQLNGDKGPQVLKQKLLQKGIASHDIDPILSQTDFTQLAQKVSQKLFDKYQEKLPPKALKDKITQALLTKGFSYDLAKHSLNHLNFDQDNQEIEDLLDKELDKQYRKLSRKYDGYTLKQRLYQALYRKGYNSDDINCKLRNYL</sequence>
<gene>
    <name evidence="1" type="primary">recX</name>
    <name type="ordered locus">MGAS10270_Spy1436</name>
</gene>
<proteinExistence type="inferred from homology"/>
<reference key="1">
    <citation type="journal article" date="2006" name="Proc. Natl. Acad. Sci. U.S.A.">
        <title>Molecular genetic anatomy of inter- and intraserotype variation in the human bacterial pathogen group A Streptococcus.</title>
        <authorList>
            <person name="Beres S.B."/>
            <person name="Richter E.W."/>
            <person name="Nagiec M.J."/>
            <person name="Sumby P."/>
            <person name="Porcella S.F."/>
            <person name="DeLeo F.R."/>
            <person name="Musser J.M."/>
        </authorList>
    </citation>
    <scope>NUCLEOTIDE SEQUENCE [LARGE SCALE GENOMIC DNA]</scope>
    <source>
        <strain>MGAS10270</strain>
    </source>
</reference>
<accession>Q1JFQ8</accession>
<protein>
    <recommendedName>
        <fullName evidence="1">Regulatory protein RecX</fullName>
    </recommendedName>
</protein>